<evidence type="ECO:0000255" key="1">
    <source>
        <dbReference type="HAMAP-Rule" id="MF_00295"/>
    </source>
</evidence>
<gene>
    <name evidence="1" type="primary">metAA</name>
    <name type="ordered locus">Dhaf_4581</name>
</gene>
<organism>
    <name type="scientific">Desulfitobacterium hafniense (strain DSM 10664 / DCB-2)</name>
    <dbReference type="NCBI Taxonomy" id="272564"/>
    <lineage>
        <taxon>Bacteria</taxon>
        <taxon>Bacillati</taxon>
        <taxon>Bacillota</taxon>
        <taxon>Clostridia</taxon>
        <taxon>Eubacteriales</taxon>
        <taxon>Desulfitobacteriaceae</taxon>
        <taxon>Desulfitobacterium</taxon>
    </lineage>
</organism>
<comment type="function">
    <text evidence="1">Transfers an acetyl group from acetyl-CoA to L-homoserine, forming acetyl-L-homoserine.</text>
</comment>
<comment type="catalytic activity">
    <reaction evidence="1">
        <text>L-homoserine + acetyl-CoA = O-acetyl-L-homoserine + CoA</text>
        <dbReference type="Rhea" id="RHEA:13701"/>
        <dbReference type="ChEBI" id="CHEBI:57287"/>
        <dbReference type="ChEBI" id="CHEBI:57288"/>
        <dbReference type="ChEBI" id="CHEBI:57476"/>
        <dbReference type="ChEBI" id="CHEBI:57716"/>
        <dbReference type="EC" id="2.3.1.31"/>
    </reaction>
</comment>
<comment type="pathway">
    <text evidence="1">Amino-acid biosynthesis; L-methionine biosynthesis via de novo pathway; O-acetyl-L-homoserine from L-homoserine: step 1/1.</text>
</comment>
<comment type="subcellular location">
    <subcellularLocation>
        <location evidence="1">Cytoplasm</location>
    </subcellularLocation>
</comment>
<comment type="similarity">
    <text evidence="1">Belongs to the MetA family.</text>
</comment>
<name>METAA_DESHD</name>
<reference key="1">
    <citation type="journal article" date="2012" name="BMC Microbiol.">
        <title>Genome sequence of Desulfitobacterium hafniense DCB-2, a Gram-positive anaerobe capable of dehalogenation and metal reduction.</title>
        <authorList>
            <person name="Kim S.H."/>
            <person name="Harzman C."/>
            <person name="Davis J.K."/>
            <person name="Hutcheson R."/>
            <person name="Broderick J.B."/>
            <person name="Marsh T.L."/>
            <person name="Tiedje J.M."/>
        </authorList>
    </citation>
    <scope>NUCLEOTIDE SEQUENCE [LARGE SCALE GENOMIC DNA]</scope>
    <source>
        <strain>DSM 10664 / DCB-2</strain>
    </source>
</reference>
<sequence length="307" mass="35840">MPINVPDGLPAAEILTKEDVFIMEEKRAEHQDIRPLSIVILNLMPNKIITETQILRLLGNSPLQVDITLLYPETHRSKNTPEEYLIKYYQTFDSIKDQKFDGMIITGAPIEQMPFEEVDFWPELQKIMDWSKANVFSTLFICWGAQAGLYHFFGVPKYPLPAKMFGVFPHTLNRRDIRLLRGFDDIFYVPHSRHTEVRKEDIVKVPELEILSESEESGVYLVGTKGGRQIFVTGHSEYDPYTLKAEYDRDISYELPINVPQNYYPGDDPRQTPVVRWRGHSNLLFANWLNYYVYQETPYNLEELGNR</sequence>
<accession>B8FWT4</accession>
<protein>
    <recommendedName>
        <fullName evidence="1">Homoserine O-acetyltransferase</fullName>
        <shortName evidence="1">HAT</shortName>
        <ecNumber evidence="1">2.3.1.31</ecNumber>
    </recommendedName>
    <alternativeName>
        <fullName evidence="1">Homoserine transacetylase</fullName>
        <shortName evidence="1">HTA</shortName>
    </alternativeName>
</protein>
<keyword id="KW-0012">Acyltransferase</keyword>
<keyword id="KW-0028">Amino-acid biosynthesis</keyword>
<keyword id="KW-0963">Cytoplasm</keyword>
<keyword id="KW-0486">Methionine biosynthesis</keyword>
<keyword id="KW-0808">Transferase</keyword>
<feature type="chain" id="PRO_1000191182" description="Homoserine O-acetyltransferase">
    <location>
        <begin position="1"/>
        <end position="307"/>
    </location>
</feature>
<feature type="active site" description="Acyl-thioester intermediate" evidence="1">
    <location>
        <position position="142"/>
    </location>
</feature>
<feature type="active site" description="Proton acceptor" evidence="1">
    <location>
        <position position="235"/>
    </location>
</feature>
<feature type="active site" evidence="1">
    <location>
        <position position="237"/>
    </location>
</feature>
<feature type="binding site" evidence="1">
    <location>
        <position position="163"/>
    </location>
    <ligand>
        <name>substrate</name>
    </ligand>
</feature>
<feature type="binding site" evidence="1">
    <location>
        <position position="192"/>
    </location>
    <ligand>
        <name>substrate</name>
    </ligand>
</feature>
<feature type="binding site" evidence="1">
    <location>
        <position position="249"/>
    </location>
    <ligand>
        <name>substrate</name>
    </ligand>
</feature>
<feature type="site" description="Important for acyl-CoA specificity" evidence="1">
    <location>
        <position position="111"/>
    </location>
</feature>
<feature type="site" description="Important for substrate specificity" evidence="1">
    <location>
        <position position="192"/>
    </location>
</feature>
<dbReference type="EC" id="2.3.1.31" evidence="1"/>
<dbReference type="EMBL" id="CP001336">
    <property type="protein sequence ID" value="ACL22582.1"/>
    <property type="molecule type" value="Genomic_DNA"/>
</dbReference>
<dbReference type="SMR" id="B8FWT4"/>
<dbReference type="KEGG" id="dhd:Dhaf_4581"/>
<dbReference type="HOGENOM" id="CLU_057851_0_1_9"/>
<dbReference type="UniPathway" id="UPA00051">
    <property type="reaction ID" value="UER00074"/>
</dbReference>
<dbReference type="Proteomes" id="UP000007726">
    <property type="component" value="Chromosome"/>
</dbReference>
<dbReference type="GO" id="GO:0005737">
    <property type="term" value="C:cytoplasm"/>
    <property type="evidence" value="ECO:0007669"/>
    <property type="project" value="UniProtKB-SubCell"/>
</dbReference>
<dbReference type="GO" id="GO:0004414">
    <property type="term" value="F:homoserine O-acetyltransferase activity"/>
    <property type="evidence" value="ECO:0007669"/>
    <property type="project" value="UniProtKB-EC"/>
</dbReference>
<dbReference type="GO" id="GO:0008899">
    <property type="term" value="F:homoserine O-succinyltransferase activity"/>
    <property type="evidence" value="ECO:0007669"/>
    <property type="project" value="UniProtKB-UniRule"/>
</dbReference>
<dbReference type="GO" id="GO:0019281">
    <property type="term" value="P:L-methionine biosynthetic process from homoserine via O-succinyl-L-homoserine and cystathionine"/>
    <property type="evidence" value="ECO:0007669"/>
    <property type="project" value="InterPro"/>
</dbReference>
<dbReference type="CDD" id="cd03131">
    <property type="entry name" value="GATase1_HTS"/>
    <property type="match status" value="1"/>
</dbReference>
<dbReference type="FunFam" id="3.40.50.880:FF:000004">
    <property type="entry name" value="Homoserine O-succinyltransferase"/>
    <property type="match status" value="1"/>
</dbReference>
<dbReference type="Gene3D" id="3.40.50.880">
    <property type="match status" value="1"/>
</dbReference>
<dbReference type="HAMAP" id="MF_00295">
    <property type="entry name" value="MetA_acyltransf"/>
    <property type="match status" value="1"/>
</dbReference>
<dbReference type="InterPro" id="IPR029062">
    <property type="entry name" value="Class_I_gatase-like"/>
</dbReference>
<dbReference type="InterPro" id="IPR005697">
    <property type="entry name" value="HST_MetA"/>
</dbReference>
<dbReference type="InterPro" id="IPR033752">
    <property type="entry name" value="MetA_family"/>
</dbReference>
<dbReference type="NCBIfam" id="TIGR01001">
    <property type="entry name" value="metA"/>
    <property type="match status" value="1"/>
</dbReference>
<dbReference type="PANTHER" id="PTHR20919">
    <property type="entry name" value="HOMOSERINE O-SUCCINYLTRANSFERASE"/>
    <property type="match status" value="1"/>
</dbReference>
<dbReference type="PANTHER" id="PTHR20919:SF0">
    <property type="entry name" value="HOMOSERINE O-SUCCINYLTRANSFERASE"/>
    <property type="match status" value="1"/>
</dbReference>
<dbReference type="Pfam" id="PF04204">
    <property type="entry name" value="HTS"/>
    <property type="match status" value="1"/>
</dbReference>
<dbReference type="PIRSF" id="PIRSF000450">
    <property type="entry name" value="H_ser_succinyltr"/>
    <property type="match status" value="1"/>
</dbReference>
<dbReference type="SUPFAM" id="SSF52317">
    <property type="entry name" value="Class I glutamine amidotransferase-like"/>
    <property type="match status" value="1"/>
</dbReference>
<proteinExistence type="inferred from homology"/>